<accession>Q46911</accession>
<accession>Q2MA57</accession>
<accession>Q46910</accession>
<accession>Q46912</accession>
<accession>Q6BF63</accession>
<protein>
    <recommendedName>
        <fullName>Uncharacterized FAD-linked oxidoreductase YgcU</fullName>
        <ecNumber>1.-.-.-</ecNumber>
    </recommendedName>
</protein>
<proteinExistence type="inferred from homology"/>
<dbReference type="EC" id="1.-.-.-"/>
<dbReference type="EMBL" id="U29579">
    <property type="protein sequence ID" value="AAA69284.1"/>
    <property type="status" value="ALT_FRAME"/>
    <property type="molecule type" value="Genomic_DNA"/>
</dbReference>
<dbReference type="EMBL" id="U29579">
    <property type="protein sequence ID" value="AAA69283.1"/>
    <property type="status" value="ALT_FRAME"/>
    <property type="molecule type" value="Genomic_DNA"/>
</dbReference>
<dbReference type="EMBL" id="U29579">
    <property type="protein sequence ID" value="AAA69282.1"/>
    <property type="status" value="ALT_FRAME"/>
    <property type="molecule type" value="Genomic_DNA"/>
</dbReference>
<dbReference type="EMBL" id="U00096">
    <property type="protein sequence ID" value="AAT48151.1"/>
    <property type="molecule type" value="Genomic_DNA"/>
</dbReference>
<dbReference type="EMBL" id="AP009048">
    <property type="protein sequence ID" value="BAE76849.1"/>
    <property type="molecule type" value="Genomic_DNA"/>
</dbReference>
<dbReference type="RefSeq" id="WP_000059307.1">
    <property type="nucleotide sequence ID" value="NZ_LN832404.1"/>
</dbReference>
<dbReference type="RefSeq" id="YP_026183.1">
    <property type="nucleotide sequence ID" value="NC_000913.3"/>
</dbReference>
<dbReference type="SMR" id="Q46911"/>
<dbReference type="BioGRID" id="4260744">
    <property type="interactions" value="36"/>
</dbReference>
<dbReference type="DIP" id="DIP-12136N"/>
<dbReference type="FunCoup" id="Q46911">
    <property type="interactions" value="354"/>
</dbReference>
<dbReference type="STRING" id="511145.b4463"/>
<dbReference type="PaxDb" id="511145-b4463"/>
<dbReference type="EnsemblBacteria" id="AAT48151">
    <property type="protein sequence ID" value="AAT48151"/>
    <property type="gene ID" value="b4463"/>
</dbReference>
<dbReference type="GeneID" id="2847709"/>
<dbReference type="KEGG" id="ecj:JW5442"/>
<dbReference type="KEGG" id="eco:b4463"/>
<dbReference type="KEGG" id="ecoc:C3026_15230"/>
<dbReference type="PATRIC" id="fig|1411691.4.peg.3965"/>
<dbReference type="EchoBASE" id="EB2929"/>
<dbReference type="eggNOG" id="COG0277">
    <property type="taxonomic scope" value="Bacteria"/>
</dbReference>
<dbReference type="HOGENOM" id="CLU_017779_2_3_6"/>
<dbReference type="InParanoid" id="Q46911"/>
<dbReference type="OMA" id="GTISHQH"/>
<dbReference type="OrthoDB" id="9811557at2"/>
<dbReference type="PhylomeDB" id="Q46911"/>
<dbReference type="BioCyc" id="EcoCyc:G7439-MONOMER"/>
<dbReference type="PRO" id="PR:Q46911"/>
<dbReference type="Proteomes" id="UP000000625">
    <property type="component" value="Chromosome"/>
</dbReference>
<dbReference type="GO" id="GO:0008609">
    <property type="term" value="F:alkylglycerone-phosphate synthase activity"/>
    <property type="evidence" value="ECO:0007669"/>
    <property type="project" value="InterPro"/>
</dbReference>
<dbReference type="GO" id="GO:0004458">
    <property type="term" value="F:D-lactate dehydrogenase (cytochrome) activity"/>
    <property type="evidence" value="ECO:0000318"/>
    <property type="project" value="GO_Central"/>
</dbReference>
<dbReference type="GO" id="GO:0008720">
    <property type="term" value="F:D-lactate dehydrogenase activity"/>
    <property type="evidence" value="ECO:0000318"/>
    <property type="project" value="GO_Central"/>
</dbReference>
<dbReference type="GO" id="GO:0071949">
    <property type="term" value="F:FAD binding"/>
    <property type="evidence" value="ECO:0007669"/>
    <property type="project" value="InterPro"/>
</dbReference>
<dbReference type="GO" id="GO:0050660">
    <property type="term" value="F:flavin adenine dinucleotide binding"/>
    <property type="evidence" value="ECO:0000318"/>
    <property type="project" value="GO_Central"/>
</dbReference>
<dbReference type="GO" id="GO:1903457">
    <property type="term" value="P:lactate catabolic process"/>
    <property type="evidence" value="ECO:0000318"/>
    <property type="project" value="GO_Central"/>
</dbReference>
<dbReference type="GO" id="GO:0008610">
    <property type="term" value="P:lipid biosynthetic process"/>
    <property type="evidence" value="ECO:0007669"/>
    <property type="project" value="InterPro"/>
</dbReference>
<dbReference type="Gene3D" id="3.30.300.330">
    <property type="match status" value="1"/>
</dbReference>
<dbReference type="Gene3D" id="3.30.465.10">
    <property type="match status" value="1"/>
</dbReference>
<dbReference type="Gene3D" id="3.30.70.3450">
    <property type="match status" value="1"/>
</dbReference>
<dbReference type="Gene3D" id="3.30.43.10">
    <property type="entry name" value="Uridine Diphospho-n-acetylenolpyruvylglucosamine Reductase, domain 2"/>
    <property type="match status" value="1"/>
</dbReference>
<dbReference type="Gene3D" id="1.10.45.10">
    <property type="entry name" value="Vanillyl-alcohol Oxidase, Chain A, domain 4"/>
    <property type="match status" value="1"/>
</dbReference>
<dbReference type="InterPro" id="IPR025650">
    <property type="entry name" value="Alkyl-DHAP_Synthase"/>
</dbReference>
<dbReference type="InterPro" id="IPR004113">
    <property type="entry name" value="FAD-bd_oxidored_4_C"/>
</dbReference>
<dbReference type="InterPro" id="IPR016166">
    <property type="entry name" value="FAD-bd_PCMH"/>
</dbReference>
<dbReference type="InterPro" id="IPR036318">
    <property type="entry name" value="FAD-bd_PCMH-like_sf"/>
</dbReference>
<dbReference type="InterPro" id="IPR016167">
    <property type="entry name" value="FAD-bd_PCMH_sub1"/>
</dbReference>
<dbReference type="InterPro" id="IPR016169">
    <property type="entry name" value="FAD-bd_PCMH_sub2"/>
</dbReference>
<dbReference type="InterPro" id="IPR016164">
    <property type="entry name" value="FAD-linked_Oxase-like_C"/>
</dbReference>
<dbReference type="InterPro" id="IPR006094">
    <property type="entry name" value="Oxid_FAD_bind_N"/>
</dbReference>
<dbReference type="InterPro" id="IPR016171">
    <property type="entry name" value="Vanillyl_alc_oxidase_C-sub2"/>
</dbReference>
<dbReference type="PANTHER" id="PTHR46568">
    <property type="entry name" value="ALKYLDIHYDROXYACETONEPHOSPHATE SYNTHASE, PEROXISOMAL"/>
    <property type="match status" value="1"/>
</dbReference>
<dbReference type="PANTHER" id="PTHR46568:SF1">
    <property type="entry name" value="ALKYLDIHYDROXYACETONEPHOSPHATE SYNTHASE, PEROXISOMAL"/>
    <property type="match status" value="1"/>
</dbReference>
<dbReference type="Pfam" id="PF02913">
    <property type="entry name" value="FAD-oxidase_C"/>
    <property type="match status" value="1"/>
</dbReference>
<dbReference type="Pfam" id="PF01565">
    <property type="entry name" value="FAD_binding_4"/>
    <property type="match status" value="1"/>
</dbReference>
<dbReference type="SUPFAM" id="SSF56176">
    <property type="entry name" value="FAD-binding/transporter-associated domain-like"/>
    <property type="match status" value="1"/>
</dbReference>
<dbReference type="SUPFAM" id="SSF55103">
    <property type="entry name" value="FAD-linked oxidases, C-terminal domain"/>
    <property type="match status" value="1"/>
</dbReference>
<dbReference type="PROSITE" id="PS51387">
    <property type="entry name" value="FAD_PCMH"/>
    <property type="match status" value="1"/>
</dbReference>
<organism>
    <name type="scientific">Escherichia coli (strain K12)</name>
    <dbReference type="NCBI Taxonomy" id="83333"/>
    <lineage>
        <taxon>Bacteria</taxon>
        <taxon>Pseudomonadati</taxon>
        <taxon>Pseudomonadota</taxon>
        <taxon>Gammaproteobacteria</taxon>
        <taxon>Enterobacterales</taxon>
        <taxon>Enterobacteriaceae</taxon>
        <taxon>Escherichia</taxon>
    </lineage>
</organism>
<evidence type="ECO:0000255" key="1">
    <source>
        <dbReference type="PROSITE-ProRule" id="PRU00718"/>
    </source>
</evidence>
<evidence type="ECO:0000305" key="2"/>
<name>YGCU_ECOLI</name>
<keyword id="KW-0274">FAD</keyword>
<keyword id="KW-0285">Flavoprotein</keyword>
<keyword id="KW-0560">Oxidoreductase</keyword>
<keyword id="KW-1185">Reference proteome</keyword>
<reference key="1">
    <citation type="journal article" date="1997" name="Science">
        <title>The complete genome sequence of Escherichia coli K-12.</title>
        <authorList>
            <person name="Blattner F.R."/>
            <person name="Plunkett G. III"/>
            <person name="Bloch C.A."/>
            <person name="Perna N.T."/>
            <person name="Burland V."/>
            <person name="Riley M."/>
            <person name="Collado-Vides J."/>
            <person name="Glasner J.D."/>
            <person name="Rode C.K."/>
            <person name="Mayhew G.F."/>
            <person name="Gregor J."/>
            <person name="Davis N.W."/>
            <person name="Kirkpatrick H.A."/>
            <person name="Goeden M.A."/>
            <person name="Rose D.J."/>
            <person name="Mau B."/>
            <person name="Shao Y."/>
        </authorList>
    </citation>
    <scope>NUCLEOTIDE SEQUENCE [LARGE SCALE GENOMIC DNA]</scope>
    <source>
        <strain>K12 / MG1655 / ATCC 47076</strain>
    </source>
</reference>
<reference key="2">
    <citation type="journal article" date="2006" name="Nucleic Acids Res.">
        <title>Escherichia coli K-12: a cooperatively developed annotation snapshot -- 2005.</title>
        <authorList>
            <person name="Riley M."/>
            <person name="Abe T."/>
            <person name="Arnaud M.B."/>
            <person name="Berlyn M.K.B."/>
            <person name="Blattner F.R."/>
            <person name="Chaudhuri R.R."/>
            <person name="Glasner J.D."/>
            <person name="Horiuchi T."/>
            <person name="Keseler I.M."/>
            <person name="Kosuge T."/>
            <person name="Mori H."/>
            <person name="Perna N.T."/>
            <person name="Plunkett G. III"/>
            <person name="Rudd K.E."/>
            <person name="Serres M.H."/>
            <person name="Thomas G.H."/>
            <person name="Thomson N.R."/>
            <person name="Wishart D."/>
            <person name="Wanner B.L."/>
        </authorList>
    </citation>
    <scope>SEQUENCE REVISION</scope>
</reference>
<reference key="3">
    <citation type="journal article" date="2006" name="Mol. Syst. Biol.">
        <title>Highly accurate genome sequences of Escherichia coli K-12 strains MG1655 and W3110.</title>
        <authorList>
            <person name="Hayashi K."/>
            <person name="Morooka N."/>
            <person name="Yamamoto Y."/>
            <person name="Fujita K."/>
            <person name="Isono K."/>
            <person name="Choi S."/>
            <person name="Ohtsubo E."/>
            <person name="Baba T."/>
            <person name="Wanner B.L."/>
            <person name="Mori H."/>
            <person name="Horiuchi T."/>
        </authorList>
    </citation>
    <scope>NUCLEOTIDE SEQUENCE [LARGE SCALE GENOMIC DNA]</scope>
    <source>
        <strain>K12 / W3110 / ATCC 27325 / DSM 5911</strain>
    </source>
</reference>
<comment type="similarity">
    <text evidence="2">Belongs to the FAD-binding oxidoreductase/transferase type 4 family.</text>
</comment>
<comment type="sequence caution" evidence="2">
    <conflict type="frameshift">
        <sequence resource="EMBL-CDS" id="AAA69282"/>
    </conflict>
</comment>
<comment type="sequence caution" evidence="2">
    <conflict type="frameshift">
        <sequence resource="EMBL-CDS" id="AAA69283"/>
    </conflict>
</comment>
<comment type="sequence caution" evidence="2">
    <conflict type="frameshift">
        <sequence resource="EMBL-CDS" id="AAA69284"/>
    </conflict>
</comment>
<gene>
    <name type="primary">ygcU</name>
    <name type="synonym">ygcT</name>
    <name type="synonym">ygcV</name>
    <name type="ordered locus">b4463</name>
    <name type="ordered locus">JW5442</name>
</gene>
<feature type="chain" id="PRO_0000128183" description="Uncharacterized FAD-linked oxidoreductase YgcU">
    <location>
        <begin position="1"/>
        <end position="484"/>
    </location>
</feature>
<feature type="domain" description="FAD-binding PCMH-type" evidence="1">
    <location>
        <begin position="47"/>
        <end position="226"/>
    </location>
</feature>
<sequence length="484" mass="53737">MSLSRAAIVDQLKEIVGADRVITDETVLKKNSIDRFRKFPDIHGIYTLPIPAAVVKLGSTEQVSRVLNFMNAHKINGVPRTGASATEGGLETVVENSVVLDGSAMNQIINIDIENMQATAQCGVPLEVLENALREKGYTTGHSPQSKPLAQMGGLVATRSIGQFSTLYGAIEDMVVGLEAVLADGTVTRIKNVPRRAAGPDIRHIIIGNEGALCYITEVTVKIFKFTPENNLFYGYILEDMKTGFNILREIMVEGYRPSIARLYDAEDGTQHFTHFADGKCVLIFMAEGNPRIAKVTGEGIAEIVARYPQCQRVDSKLIETWFNNLNWGPDKVAAERVQILKTGNMGFTTEVSGCWSCIHEIYESVINRIRTEFPHADDITMLGGHSSHSYQNGTNMYFVYDYNVVDCKPEEEIDKYHNPLNKIICEETIRLGGSMVHHHGIGKHRVHWSKLEHGSAWALLEGLKKQFDPNGIMNTGTIYPIEK</sequence>